<protein>
    <recommendedName>
        <fullName>Uncharacterized protein YbbA</fullName>
    </recommendedName>
</protein>
<proteinExistence type="evidence at transcript level"/>
<sequence length="250" mass="28299">MKGSLSEHKAGNRRFTLYLPPSYSTDSGGFPAVYVQDGSSLFQNQIELLESAFQQQRLPELVLIGIEPENRLDEYTPWPAASLSDRFTDFGGMGYHYLSDITNQFIPLIEENWNVTREPQSRGMIGASLGGLISMFAILKYPSMFGKIGSISGSYWYENAAETIHISSLKPGTARVFMSIGSEEGREKQSIQRHMLKKTKQVHQSLKEKGFTEDQLCLSIEKGAVHHHKYFCKQFINALEWLYGKNRSTL</sequence>
<gene>
    <name type="primary">ybbA</name>
    <name type="ordered locus">BSU01600</name>
</gene>
<dbReference type="EMBL" id="D84213">
    <property type="protein sequence ID" value="BAA12261.1"/>
    <property type="status" value="ALT_INIT"/>
    <property type="molecule type" value="Genomic_DNA"/>
</dbReference>
<dbReference type="EMBL" id="AL009126">
    <property type="protein sequence ID" value="CAB11936.2"/>
    <property type="molecule type" value="Genomic_DNA"/>
</dbReference>
<dbReference type="PIR" id="E69743">
    <property type="entry name" value="E69743"/>
</dbReference>
<dbReference type="RefSeq" id="WP_003234982.1">
    <property type="nucleotide sequence ID" value="NZ_OZ025638.1"/>
</dbReference>
<dbReference type="SMR" id="P55192"/>
<dbReference type="FunCoup" id="P55192">
    <property type="interactions" value="24"/>
</dbReference>
<dbReference type="STRING" id="224308.BSU01600"/>
<dbReference type="PaxDb" id="224308-BSU01600"/>
<dbReference type="EnsemblBacteria" id="CAB11936">
    <property type="protein sequence ID" value="CAB11936"/>
    <property type="gene ID" value="BSU_01600"/>
</dbReference>
<dbReference type="GeneID" id="938887"/>
<dbReference type="KEGG" id="bsu:BSU01600"/>
<dbReference type="PATRIC" id="fig|224308.179.peg.166"/>
<dbReference type="eggNOG" id="COG2819">
    <property type="taxonomic scope" value="Bacteria"/>
</dbReference>
<dbReference type="InParanoid" id="P55192"/>
<dbReference type="OrthoDB" id="9784036at2"/>
<dbReference type="PhylomeDB" id="P55192"/>
<dbReference type="BioCyc" id="BSUB:BSU01600-MONOMER"/>
<dbReference type="Proteomes" id="UP000001570">
    <property type="component" value="Chromosome"/>
</dbReference>
<dbReference type="Gene3D" id="3.40.50.1820">
    <property type="entry name" value="alpha/beta hydrolase"/>
    <property type="match status" value="1"/>
</dbReference>
<dbReference type="InterPro" id="IPR029058">
    <property type="entry name" value="AB_hydrolase_fold"/>
</dbReference>
<dbReference type="InterPro" id="IPR000801">
    <property type="entry name" value="Esterase-like"/>
</dbReference>
<dbReference type="InterPro" id="IPR050583">
    <property type="entry name" value="Mycobacterial_A85_antigen"/>
</dbReference>
<dbReference type="PANTHER" id="PTHR48098">
    <property type="entry name" value="ENTEROCHELIN ESTERASE-RELATED"/>
    <property type="match status" value="1"/>
</dbReference>
<dbReference type="PANTHER" id="PTHR48098:SF3">
    <property type="entry name" value="IRON(III) ENTEROBACTIN ESTERASE"/>
    <property type="match status" value="1"/>
</dbReference>
<dbReference type="Pfam" id="PF00756">
    <property type="entry name" value="Esterase"/>
    <property type="match status" value="1"/>
</dbReference>
<dbReference type="SUPFAM" id="SSF53474">
    <property type="entry name" value="alpha/beta-Hydrolases"/>
    <property type="match status" value="1"/>
</dbReference>
<feature type="chain" id="PRO_0000049455" description="Uncharacterized protein YbbA">
    <location>
        <begin position="1"/>
        <end position="250"/>
    </location>
</feature>
<keyword id="KW-1185">Reference proteome</keyword>
<reference key="1">
    <citation type="journal article" date="1997" name="Microbiology">
        <title>Sequence and analysis of a 31 kb segment of the Bacillus subtilis chromosome in the area of the rrnH and rrnG operons.</title>
        <authorList>
            <person name="Liu H."/>
            <person name="Haga K."/>
            <person name="Yasumoto K."/>
            <person name="Ohashi Y."/>
            <person name="Yoshikawa H."/>
            <person name="Takahashi H."/>
        </authorList>
    </citation>
    <scope>NUCLEOTIDE SEQUENCE [GENOMIC DNA]</scope>
    <source>
        <strain>168</strain>
    </source>
</reference>
<reference key="2">
    <citation type="journal article" date="1997" name="Nature">
        <title>The complete genome sequence of the Gram-positive bacterium Bacillus subtilis.</title>
        <authorList>
            <person name="Kunst F."/>
            <person name="Ogasawara N."/>
            <person name="Moszer I."/>
            <person name="Albertini A.M."/>
            <person name="Alloni G."/>
            <person name="Azevedo V."/>
            <person name="Bertero M.G."/>
            <person name="Bessieres P."/>
            <person name="Bolotin A."/>
            <person name="Borchert S."/>
            <person name="Borriss R."/>
            <person name="Boursier L."/>
            <person name="Brans A."/>
            <person name="Braun M."/>
            <person name="Brignell S.C."/>
            <person name="Bron S."/>
            <person name="Brouillet S."/>
            <person name="Bruschi C.V."/>
            <person name="Caldwell B."/>
            <person name="Capuano V."/>
            <person name="Carter N.M."/>
            <person name="Choi S.-K."/>
            <person name="Codani J.-J."/>
            <person name="Connerton I.F."/>
            <person name="Cummings N.J."/>
            <person name="Daniel R.A."/>
            <person name="Denizot F."/>
            <person name="Devine K.M."/>
            <person name="Duesterhoeft A."/>
            <person name="Ehrlich S.D."/>
            <person name="Emmerson P.T."/>
            <person name="Entian K.-D."/>
            <person name="Errington J."/>
            <person name="Fabret C."/>
            <person name="Ferrari E."/>
            <person name="Foulger D."/>
            <person name="Fritz C."/>
            <person name="Fujita M."/>
            <person name="Fujita Y."/>
            <person name="Fuma S."/>
            <person name="Galizzi A."/>
            <person name="Galleron N."/>
            <person name="Ghim S.-Y."/>
            <person name="Glaser P."/>
            <person name="Goffeau A."/>
            <person name="Golightly E.J."/>
            <person name="Grandi G."/>
            <person name="Guiseppi G."/>
            <person name="Guy B.J."/>
            <person name="Haga K."/>
            <person name="Haiech J."/>
            <person name="Harwood C.R."/>
            <person name="Henaut A."/>
            <person name="Hilbert H."/>
            <person name="Holsappel S."/>
            <person name="Hosono S."/>
            <person name="Hullo M.-F."/>
            <person name="Itaya M."/>
            <person name="Jones L.-M."/>
            <person name="Joris B."/>
            <person name="Karamata D."/>
            <person name="Kasahara Y."/>
            <person name="Klaerr-Blanchard M."/>
            <person name="Klein C."/>
            <person name="Kobayashi Y."/>
            <person name="Koetter P."/>
            <person name="Koningstein G."/>
            <person name="Krogh S."/>
            <person name="Kumano M."/>
            <person name="Kurita K."/>
            <person name="Lapidus A."/>
            <person name="Lardinois S."/>
            <person name="Lauber J."/>
            <person name="Lazarevic V."/>
            <person name="Lee S.-M."/>
            <person name="Levine A."/>
            <person name="Liu H."/>
            <person name="Masuda S."/>
            <person name="Mauel C."/>
            <person name="Medigue C."/>
            <person name="Medina N."/>
            <person name="Mellado R.P."/>
            <person name="Mizuno M."/>
            <person name="Moestl D."/>
            <person name="Nakai S."/>
            <person name="Noback M."/>
            <person name="Noone D."/>
            <person name="O'Reilly M."/>
            <person name="Ogawa K."/>
            <person name="Ogiwara A."/>
            <person name="Oudega B."/>
            <person name="Park S.-H."/>
            <person name="Parro V."/>
            <person name="Pohl T.M."/>
            <person name="Portetelle D."/>
            <person name="Porwollik S."/>
            <person name="Prescott A.M."/>
            <person name="Presecan E."/>
            <person name="Pujic P."/>
            <person name="Purnelle B."/>
            <person name="Rapoport G."/>
            <person name="Rey M."/>
            <person name="Reynolds S."/>
            <person name="Rieger M."/>
            <person name="Rivolta C."/>
            <person name="Rocha E."/>
            <person name="Roche B."/>
            <person name="Rose M."/>
            <person name="Sadaie Y."/>
            <person name="Sato T."/>
            <person name="Scanlan E."/>
            <person name="Schleich S."/>
            <person name="Schroeter R."/>
            <person name="Scoffone F."/>
            <person name="Sekiguchi J."/>
            <person name="Sekowska A."/>
            <person name="Seror S.J."/>
            <person name="Serror P."/>
            <person name="Shin B.-S."/>
            <person name="Soldo B."/>
            <person name="Sorokin A."/>
            <person name="Tacconi E."/>
            <person name="Takagi T."/>
            <person name="Takahashi H."/>
            <person name="Takemaru K."/>
            <person name="Takeuchi M."/>
            <person name="Tamakoshi A."/>
            <person name="Tanaka T."/>
            <person name="Terpstra P."/>
            <person name="Tognoni A."/>
            <person name="Tosato V."/>
            <person name="Uchiyama S."/>
            <person name="Vandenbol M."/>
            <person name="Vannier F."/>
            <person name="Vassarotti A."/>
            <person name="Viari A."/>
            <person name="Wambutt R."/>
            <person name="Wedler E."/>
            <person name="Wedler H."/>
            <person name="Weitzenegger T."/>
            <person name="Winters P."/>
            <person name="Wipat A."/>
            <person name="Yamamoto H."/>
            <person name="Yamane K."/>
            <person name="Yasumoto K."/>
            <person name="Yata K."/>
            <person name="Yoshida K."/>
            <person name="Yoshikawa H.-F."/>
            <person name="Zumstein E."/>
            <person name="Yoshikawa H."/>
            <person name="Danchin A."/>
        </authorList>
    </citation>
    <scope>NUCLEOTIDE SEQUENCE [LARGE SCALE GENOMIC DNA]</scope>
    <source>
        <strain>168</strain>
    </source>
</reference>
<reference key="3">
    <citation type="journal article" date="2007" name="Mol. Microbiol.">
        <title>Substrate induction of siderophore transport in Bacillus subtilis mediated by a novel one-component regulator.</title>
        <authorList>
            <person name="Gaballa A."/>
            <person name="Helmann J.D."/>
        </authorList>
    </citation>
    <scope>INDUCTION</scope>
    <source>
        <strain>168 / CU1065</strain>
    </source>
</reference>
<organism>
    <name type="scientific">Bacillus subtilis (strain 168)</name>
    <dbReference type="NCBI Taxonomy" id="224308"/>
    <lineage>
        <taxon>Bacteria</taxon>
        <taxon>Bacillati</taxon>
        <taxon>Bacillota</taxon>
        <taxon>Bacilli</taxon>
        <taxon>Bacillales</taxon>
        <taxon>Bacillaceae</taxon>
        <taxon>Bacillus</taxon>
    </lineage>
</organism>
<accession>P55192</accession>
<accession>Q9S6X7</accession>
<comment type="induction">
    <text evidence="1">Induced by Btr in iron-limited conditions.</text>
</comment>
<comment type="sequence caution" evidence="2">
    <conflict type="erroneous initiation">
        <sequence resource="EMBL-CDS" id="BAA12261"/>
    </conflict>
</comment>
<evidence type="ECO:0000269" key="1">
    <source>
    </source>
</evidence>
<evidence type="ECO:0000305" key="2"/>
<name>YBBA_BACSU</name>